<keyword id="KW-0067">ATP-binding</keyword>
<keyword id="KW-0227">DNA damage</keyword>
<keyword id="KW-0234">DNA repair</keyword>
<keyword id="KW-0238">DNA-binding</keyword>
<keyword id="KW-0347">Helicase</keyword>
<keyword id="KW-0378">Hydrolase</keyword>
<keyword id="KW-0413">Isomerase</keyword>
<keyword id="KW-0547">Nucleotide-binding</keyword>
<keyword id="KW-1185">Reference proteome</keyword>
<name>HERA_SULAC</name>
<evidence type="ECO:0000250" key="1">
    <source>
        <dbReference type="UniProtKB" id="Q8U1P0"/>
    </source>
</evidence>
<evidence type="ECO:0000250" key="2">
    <source>
        <dbReference type="UniProtKB" id="Q97WG8"/>
    </source>
</evidence>
<evidence type="ECO:0000269" key="3">
    <source>
    </source>
</evidence>
<evidence type="ECO:0000269" key="4">
    <source>
    </source>
</evidence>
<evidence type="ECO:0000303" key="5">
    <source>
    </source>
</evidence>
<evidence type="ECO:0000305" key="6"/>
<evidence type="ECO:0000312" key="7">
    <source>
        <dbReference type="EMBL" id="AAY79483.1"/>
    </source>
</evidence>
<evidence type="ECO:0000312" key="8">
    <source>
        <dbReference type="EMBL" id="CAE51870.1"/>
    </source>
</evidence>
<sequence length="495" mass="55449">MTIGYIIGSATINEATAILEQKIRAGYYVILEYDGDKILGLITNVYTGSPLLDDNLNDVKFVQRIKQLEANKIPFFIKARIKLLCKLDGKFTQPDLPPVAGTPVRLASDEELSTVFSAGDVRIGKLIGSNVEVKIRLNPLSRHLAILAATGSGKSNTVAILSQRLVEIGGSILIFDYHGEYYDSTLPNLNIIEPKLNPLYLSVNEFATLLEIRENANIQYRIIRRTFNQLKEEINNEIKEGKTSLAELNSNFFERLKVKIEEEGRNEKRKESKDEVLNKVEDFAERYSDIIDITFGDVINKIKLGKINVVNLSSLDEDAIDAIVAHYLRRILTSRKENKIKKDSGLKFPILTVVEEAHVLLSKDTNTLTKKWAGRIAREGRKFGVGLIIVSQRPKGLDENILSQMTNKIILKIVEPSDKKYVLETSDNLSEDLADGLSSLDTGEAIIIGNVVKLPTIIKIDKFEGKLSGSDPNLTEEWKRAKEEEIVHSDVSDWG</sequence>
<proteinExistence type="evidence at protein level"/>
<dbReference type="EC" id="5.6.2.3" evidence="3"/>
<dbReference type="EC" id="5.6.2.4" evidence="3"/>
<dbReference type="EMBL" id="AJ437617">
    <property type="protein sequence ID" value="CAE51870.1"/>
    <property type="molecule type" value="Genomic_DNA"/>
</dbReference>
<dbReference type="EMBL" id="CP000077">
    <property type="protein sequence ID" value="AAY79483.1"/>
    <property type="molecule type" value="Genomic_DNA"/>
</dbReference>
<dbReference type="RefSeq" id="WP_011276984.1">
    <property type="nucleotide sequence ID" value="NC_007181.1"/>
</dbReference>
<dbReference type="SMR" id="F2Z5Z6"/>
<dbReference type="STRING" id="330779.Saci_0053"/>
<dbReference type="GeneID" id="14550585"/>
<dbReference type="GeneID" id="78440409"/>
<dbReference type="KEGG" id="sai:Saci_0053"/>
<dbReference type="PATRIC" id="fig|330779.12.peg.50"/>
<dbReference type="eggNOG" id="arCOG00280">
    <property type="taxonomic scope" value="Archaea"/>
</dbReference>
<dbReference type="HOGENOM" id="CLU_023842_2_0_2"/>
<dbReference type="Proteomes" id="UP000001018">
    <property type="component" value="Chromosome"/>
</dbReference>
<dbReference type="GO" id="GO:0005524">
    <property type="term" value="F:ATP binding"/>
    <property type="evidence" value="ECO:0007669"/>
    <property type="project" value="UniProtKB-KW"/>
</dbReference>
<dbReference type="GO" id="GO:0016887">
    <property type="term" value="F:ATP hydrolysis activity"/>
    <property type="evidence" value="ECO:0007669"/>
    <property type="project" value="RHEA"/>
</dbReference>
<dbReference type="GO" id="GO:0004386">
    <property type="term" value="F:helicase activity"/>
    <property type="evidence" value="ECO:0007669"/>
    <property type="project" value="UniProtKB-KW"/>
</dbReference>
<dbReference type="GO" id="GO:0006281">
    <property type="term" value="P:DNA repair"/>
    <property type="evidence" value="ECO:0007669"/>
    <property type="project" value="UniProtKB-KW"/>
</dbReference>
<dbReference type="Gene3D" id="3.40.50.300">
    <property type="entry name" value="P-loop containing nucleotide triphosphate hydrolases"/>
    <property type="match status" value="2"/>
</dbReference>
<dbReference type="InterPro" id="IPR053460">
    <property type="entry name" value="DSB_Repair_Helicase"/>
</dbReference>
<dbReference type="InterPro" id="IPR008571">
    <property type="entry name" value="HerA-like"/>
</dbReference>
<dbReference type="InterPro" id="IPR018538">
    <property type="entry name" value="HerA_barrel_dom"/>
</dbReference>
<dbReference type="InterPro" id="IPR033186">
    <property type="entry name" value="HerA_C"/>
</dbReference>
<dbReference type="InterPro" id="IPR002789">
    <property type="entry name" value="HerA_central"/>
</dbReference>
<dbReference type="InterPro" id="IPR027417">
    <property type="entry name" value="P-loop_NTPase"/>
</dbReference>
<dbReference type="NCBIfam" id="NF040937">
    <property type="entry name" value="HerA_Thermprot"/>
    <property type="match status" value="1"/>
</dbReference>
<dbReference type="PANTHER" id="PTHR42957">
    <property type="entry name" value="HELICASE MJ1565-RELATED"/>
    <property type="match status" value="1"/>
</dbReference>
<dbReference type="PANTHER" id="PTHR42957:SF1">
    <property type="entry name" value="HELICASE MJ1565-RELATED"/>
    <property type="match status" value="1"/>
</dbReference>
<dbReference type="Pfam" id="PF01935">
    <property type="entry name" value="DUF87"/>
    <property type="match status" value="1"/>
</dbReference>
<dbReference type="Pfam" id="PF09378">
    <property type="entry name" value="HAS-barrel"/>
    <property type="match status" value="1"/>
</dbReference>
<dbReference type="Pfam" id="PF05872">
    <property type="entry name" value="HerA_C"/>
    <property type="match status" value="1"/>
</dbReference>
<dbReference type="SUPFAM" id="SSF52540">
    <property type="entry name" value="P-loop containing nucleoside triphosphate hydrolases"/>
    <property type="match status" value="1"/>
</dbReference>
<reference key="1">
    <citation type="journal article" date="2002" name="EMBO Rep.">
        <title>NurA, a novel 5'-3' nuclease gene linked to rad50 and mre11 homologs of thermophilic Archaea.</title>
        <authorList>
            <person name="Constantinesco F."/>
            <person name="Forterre P."/>
            <person name="Elie C."/>
        </authorList>
    </citation>
    <scope>NUCLEOTIDE SEQUENCE [GENOMIC DNA]</scope>
    <source>
        <strain>ATCC 33909 / DSM 639 / JCM 8929 / NBRC 15157 / NCIMB 11770</strain>
    </source>
</reference>
<reference key="2">
    <citation type="journal article" date="2005" name="J. Bacteriol.">
        <title>The genome of Sulfolobus acidocaldarius, a model organism of the Crenarchaeota.</title>
        <authorList>
            <person name="Chen L."/>
            <person name="Bruegger K."/>
            <person name="Skovgaard M."/>
            <person name="Redder P."/>
            <person name="She Q."/>
            <person name="Torarinsson E."/>
            <person name="Greve B."/>
            <person name="Awayez M."/>
            <person name="Zibat A."/>
            <person name="Klenk H.-P."/>
            <person name="Garrett R.A."/>
        </authorList>
    </citation>
    <scope>NUCLEOTIDE SEQUENCE [LARGE SCALE GENOMIC DNA]</scope>
    <source>
        <strain>ATCC 33909 / DSM 639 / JCM 8929 / NBRC 15157 / NCIMB 11770</strain>
    </source>
</reference>
<reference key="3">
    <citation type="journal article" date="2004" name="Nucleic Acids Res.">
        <title>A bipolar DNA helicase gene, herA, clusters with rad50, mre11 and nurA genes in thermophilic archaea.</title>
        <authorList>
            <person name="Constantinesco F."/>
            <person name="Forterre P."/>
            <person name="Koonin E.V."/>
            <person name="Aravind L."/>
            <person name="Elie C."/>
        </authorList>
    </citation>
    <scope>FUNCTION AS AN ATPASE AND AS A BIDIRECTIONAL HELICASE</scope>
    <scope>CATALYTIC ACTIVITY</scope>
    <scope>ACTIVITY REGULATION</scope>
    <scope>INDUCTION</scope>
    <scope>MUTAGENESIS OF LYS-154</scope>
    <source>
        <strain>ATCC 33909 / DSM 639 / JCM 8929 / NBRC 15157 / NCIMB 11770</strain>
    </source>
</reference>
<reference key="4">
    <citation type="journal article" date="2008" name="BMC Mol. Biol.">
        <title>The Mre11 protein interacts with both Rad50 and the HerA bipolar helicase and is recruited to DNA following gamma irradiation in the archaeon Sulfolobus acidocaldarius.</title>
        <authorList>
            <person name="Quaiser A."/>
            <person name="Constantinesco F."/>
            <person name="White M.F."/>
            <person name="Forterre P."/>
            <person name="Elie C."/>
        </authorList>
    </citation>
    <scope>INTERACTION WITH RAD50 AND MRE11</scope>
    <source>
        <strain>ATCC 33909 / DSM 639 / JCM 8929 / NBRC 15157 / NCIMB 11770</strain>
    </source>
</reference>
<gene>
    <name evidence="5" type="primary">herA</name>
    <name evidence="8" type="synonym">P4</name>
    <name evidence="7" type="ordered locus">Saci_0053</name>
</gene>
<organism>
    <name type="scientific">Sulfolobus acidocaldarius (strain ATCC 33909 / DSM 639 / JCM 8929 / NBRC 15157 / NCIMB 11770)</name>
    <dbReference type="NCBI Taxonomy" id="330779"/>
    <lineage>
        <taxon>Archaea</taxon>
        <taxon>Thermoproteota</taxon>
        <taxon>Thermoprotei</taxon>
        <taxon>Sulfolobales</taxon>
        <taxon>Sulfolobaceae</taxon>
        <taxon>Sulfolobus</taxon>
    </lineage>
</organism>
<feature type="chain" id="PRO_0000434024" description="DNA double-strand break repair helicase HerA">
    <location>
        <begin position="1"/>
        <end position="495"/>
    </location>
</feature>
<feature type="binding site" evidence="2">
    <location>
        <position position="142"/>
    </location>
    <ligand>
        <name>ATP</name>
        <dbReference type="ChEBI" id="CHEBI:30616"/>
    </ligand>
</feature>
<feature type="binding site" evidence="2">
    <location>
        <begin position="151"/>
        <end position="156"/>
    </location>
    <ligand>
        <name>ATP</name>
        <dbReference type="ChEBI" id="CHEBI:30616"/>
    </ligand>
</feature>
<feature type="binding site" evidence="2">
    <location>
        <begin position="459"/>
        <end position="460"/>
    </location>
    <ligand>
        <name>ATP</name>
        <dbReference type="ChEBI" id="CHEBI:30616"/>
    </ligand>
</feature>
<feature type="mutagenesis site" description="Abolishes both the ATPase and the helicase activities." evidence="3">
    <original>K</original>
    <variation>A</variation>
    <location>
        <position position="154"/>
    </location>
</feature>
<comment type="function">
    <text evidence="1 3">Involved in DNA double-strand break (DSB) repair (PubMed:14990749). Probably acts with NurA to stimulate resection of the 5' strand and produce the long 3' single-strand that is required for RadA loading (By similarity). Has DNA-dependent ATPase activity and bidirectional DNA helicase activity (PubMed:14990749). Loads on either a 3' or a 5' DNA tail for subsequent DNA unwinding; has no activity on blunt-end DNA (PubMed:14990749).</text>
</comment>
<comment type="catalytic activity">
    <reaction evidence="3">
        <text>Couples ATP hydrolysis with the unwinding of duplex DNA at the replication fork by translocating in the 5'-3' direction. This creates two antiparallel DNA single strands (ssDNA). The leading ssDNA polymer is the template for DNA polymerase III holoenzyme which synthesizes a continuous strand.</text>
        <dbReference type="EC" id="5.6.2.3"/>
    </reaction>
</comment>
<comment type="catalytic activity">
    <reaction evidence="3">
        <text>ATP + H2O = ADP + phosphate + H(+)</text>
        <dbReference type="Rhea" id="RHEA:13065"/>
        <dbReference type="ChEBI" id="CHEBI:15377"/>
        <dbReference type="ChEBI" id="CHEBI:15378"/>
        <dbReference type="ChEBI" id="CHEBI:30616"/>
        <dbReference type="ChEBI" id="CHEBI:43474"/>
        <dbReference type="ChEBI" id="CHEBI:456216"/>
        <dbReference type="EC" id="5.6.2.3"/>
    </reaction>
</comment>
<comment type="catalytic activity">
    <reaction evidence="3">
        <text>Couples ATP hydrolysis with the unwinding of duplex DNA by translocating in the 3'-5' direction.</text>
        <dbReference type="EC" id="5.6.2.4"/>
    </reaction>
</comment>
<comment type="catalytic activity">
    <reaction evidence="3">
        <text>ATP + H2O = ADP + phosphate + H(+)</text>
        <dbReference type="Rhea" id="RHEA:13065"/>
        <dbReference type="ChEBI" id="CHEBI:15377"/>
        <dbReference type="ChEBI" id="CHEBI:15378"/>
        <dbReference type="ChEBI" id="CHEBI:30616"/>
        <dbReference type="ChEBI" id="CHEBI:43474"/>
        <dbReference type="ChEBI" id="CHEBI:456216"/>
        <dbReference type="EC" id="5.6.2.4"/>
    </reaction>
</comment>
<comment type="activity regulation">
    <text evidence="3">ATPase activity is slightly stimulated by either circular single- or double-stranded (ds)DNA with a weak preference for dsDNA.</text>
</comment>
<comment type="subunit">
    <text evidence="4">Interacts with Rad50 and Mre11.</text>
</comment>
<comment type="induction">
    <text evidence="3">Part of the nurA-rad50-mre11-herA operon, these genes are cotranscribed.</text>
</comment>
<comment type="similarity">
    <text evidence="6">Belongs to the HerA family.</text>
</comment>
<accession>F2Z5Z6</accession>
<accession>Q4JCJ6</accession>
<accession>Q7LYV9</accession>
<protein>
    <recommendedName>
        <fullName evidence="6">DNA double-strand break repair helicase HerA</fullName>
        <ecNumber evidence="3">5.6.2.3</ecNumber>
        <ecNumber evidence="3">5.6.2.4</ecNumber>
    </recommendedName>
    <alternativeName>
        <fullName evidence="6">Bidirectional DNA 3'-5' and 5'-3' helicase HerA</fullName>
    </alternativeName>
    <alternativeName>
        <fullName evidence="5">Helicase repair of Archaea</fullName>
    </alternativeName>
</protein>